<keyword id="KW-0051">Antiviral defense</keyword>
<keyword id="KW-0255">Endonuclease</keyword>
<keyword id="KW-0378">Hydrolase</keyword>
<keyword id="KW-0540">Nuclease</keyword>
<keyword id="KW-0547">Nucleotide-binding</keyword>
<keyword id="KW-0694">RNA-binding</keyword>
<sequence>MKILISAVGTTDPISNNHDAALLHIARNYRPDKIVLVYSQEMMVKQDLINKVLLSIEGYNPIIEIDSTILNNDEVFLFDKMYEVMGQIVQKYTNDDNEIILNLSSGTPQIISALFALNRINDYNTQAIQVATPKNRANREYTALTESEIDALIMENQDNRLDFVDRSIKDKSEKFTQALVKRHLRSLIASFDYQAAEAIINRKEYNKLLSKKKIAYIREKLYDFSRVFKNQSILSDILSFPLDDSQKKALNYYLMIDVLKEREHIADVLIKAKSLAEFVIEETIKKDHEGLIVFDGNLPKLNPSFPDCEAILDDIDKKMKKSRGIEDTEERIFSVQSTLNLLSYLNILEFYEYDSQLQTAINGILSLNGERNKVAHGLSEIDTRLLSRKKLKQLSENLRLLLVDCLGIDSSYFNYYDKQNKELIKMLE</sequence>
<gene>
    <name evidence="5" type="primary">csm6</name>
</gene>
<feature type="chain" id="PRO_0000446126" description="CRISPR system endoribonuclease Csm6">
    <location>
        <begin position="1"/>
        <end position="428"/>
    </location>
</feature>
<feature type="region of interest" description="CARF domain" evidence="6">
    <location>
        <begin position="1"/>
        <end position="145"/>
    </location>
</feature>
<feature type="region of interest" description="HEPN domain" evidence="6">
    <location>
        <begin position="146"/>
        <end position="428"/>
    </location>
</feature>
<feature type="mutagenesis site" description="About 100-fold reduction of single-stranded ribonuclease (ssRNase) activity in presence of cyclic oligoadenylates (cOA)." evidence="4">
    <original>H</original>
    <variation>A</variation>
    <location>
        <position position="24"/>
    </location>
</feature>
<feature type="mutagenesis site" description="About 1000-fold reduction of ssRNase activity in presence of cOA." evidence="4">
    <original>NLSSGT</original>
    <variation>ALSAGA</variation>
    <location>
        <begin position="102"/>
        <end position="107"/>
    </location>
</feature>
<feature type="mutagenesis site" description="About 100-fold reduction of ssRNase activity in presence of cOA." evidence="4">
    <original>T</original>
    <variation>A</variation>
    <location>
        <position position="107"/>
    </location>
</feature>
<feature type="mutagenesis site" description="About 1000-fold reduction of ssRNase activity in presence of cOA." evidence="4">
    <original>Q</original>
    <variation>A</variation>
    <location>
        <position position="129"/>
    </location>
</feature>
<feature type="mutagenesis site" description="No ssRNase activity even in presence of cOA." evidence="4">
    <original>RNKVAH</original>
    <variation>ANKVAA</variation>
    <location>
        <begin position="371"/>
        <end position="376"/>
    </location>
</feature>
<proteinExistence type="evidence at protein level"/>
<accession>A0A0A7HIX6</accession>
<dbReference type="EC" id="3.1.-.-" evidence="4"/>
<dbReference type="EMBL" id="KM222358">
    <property type="protein sequence ID" value="AIZ03610.1"/>
    <property type="molecule type" value="Genomic_DNA"/>
</dbReference>
<dbReference type="SMR" id="A0A0A7HIX6"/>
<dbReference type="GO" id="GO:0004519">
    <property type="term" value="F:endonuclease activity"/>
    <property type="evidence" value="ECO:0007669"/>
    <property type="project" value="UniProtKB-KW"/>
</dbReference>
<dbReference type="GO" id="GO:0000166">
    <property type="term" value="F:nucleotide binding"/>
    <property type="evidence" value="ECO:0007669"/>
    <property type="project" value="UniProtKB-KW"/>
</dbReference>
<dbReference type="GO" id="GO:0003723">
    <property type="term" value="F:RNA binding"/>
    <property type="evidence" value="ECO:0007669"/>
    <property type="project" value="UniProtKB-KW"/>
</dbReference>
<dbReference type="GO" id="GO:0051607">
    <property type="term" value="P:defense response to virus"/>
    <property type="evidence" value="ECO:0007669"/>
    <property type="project" value="UniProtKB-KW"/>
</dbReference>
<dbReference type="Gene3D" id="3.40.50.10770">
    <property type="entry name" value="Hypothetical protein VC1899 like domain (Restriction endonuclease-like)"/>
    <property type="match status" value="1"/>
</dbReference>
<dbReference type="InterPro" id="IPR013489">
    <property type="entry name" value="CRISPR-assoc_prot_Csm6"/>
</dbReference>
<dbReference type="InterPro" id="IPR053955">
    <property type="entry name" value="Csm6_CARF"/>
</dbReference>
<dbReference type="InterPro" id="IPR053941">
    <property type="entry name" value="Csm6_HEPN"/>
</dbReference>
<dbReference type="NCBIfam" id="TIGR02672">
    <property type="entry name" value="cas_csm6"/>
    <property type="match status" value="1"/>
</dbReference>
<dbReference type="Pfam" id="PF22208">
    <property type="entry name" value="Cas_Csm6_CARF"/>
    <property type="match status" value="1"/>
</dbReference>
<dbReference type="Pfam" id="PF09659">
    <property type="entry name" value="Cas_Csm6_HEPN"/>
    <property type="match status" value="1"/>
</dbReference>
<organism>
    <name type="scientific">Streptococcus thermophilus</name>
    <dbReference type="NCBI Taxonomy" id="1308"/>
    <lineage>
        <taxon>Bacteria</taxon>
        <taxon>Bacillati</taxon>
        <taxon>Bacillota</taxon>
        <taxon>Bacilli</taxon>
        <taxon>Lactobacillales</taxon>
        <taxon>Streptococcaceae</taxon>
        <taxon>Streptococcus</taxon>
    </lineage>
</organism>
<protein>
    <recommendedName>
        <fullName evidence="5">CRISPR system endoribonuclease Csm6</fullName>
        <ecNumber evidence="4">3.1.-.-</ecNumber>
    </recommendedName>
    <alternativeName>
        <fullName evidence="7">CRISPR type III-A associated protein Csm6-1</fullName>
    </alternativeName>
</protein>
<reference key="1">
    <citation type="journal article" date="2014" name="Mol. Cell">
        <title>Programmable RNA shredding by the type III-A CRISPR-Cas system of Streptococcus thermophilus.</title>
        <authorList>
            <person name="Tamulaitis G."/>
            <person name="Kazlauskiene M."/>
            <person name="Manakova E."/>
            <person name="Venclovas C."/>
            <person name="Nwokeoji A.O."/>
            <person name="Dickman M.J."/>
            <person name="Horvath P."/>
            <person name="Siksnys V."/>
        </authorList>
    </citation>
    <scope>NUCLEOTIDE SEQUENCE [GENOMIC DNA]</scope>
    <scope>FUNCTION IN PHAGE RESISTANCE</scope>
    <scope>TARGETS SSRNA</scope>
    <source>
        <strain>DGCC8004</strain>
    </source>
</reference>
<reference key="2">
    <citation type="journal article" date="2016" name="Mol. Cell">
        <title>Spatiotemporal control of type III-A CRISPR-Cas immunity: coupling DNA degradation with the target RNA recognition.</title>
        <authorList>
            <person name="Kazlauskiene M."/>
            <person name="Tamulaitis G."/>
            <person name="Kostiuk G."/>
            <person name="Venclovas C."/>
            <person name="Siksnys V."/>
        </authorList>
    </citation>
    <scope>FUNCTION</scope>
    <source>
        <strain>DGCC8004</strain>
    </source>
</reference>
<reference key="3">
    <citation type="journal article" date="2017" name="Science">
        <title>A cyclic oligonucleotide signaling pathway in type III CRISPR-Cas systems.</title>
        <authorList>
            <person name="Kazlauskiene M."/>
            <person name="Kostiuk G."/>
            <person name="Venclovas C."/>
            <person name="Tamulaitis G."/>
            <person name="Siksnys V."/>
        </authorList>
    </citation>
    <scope>FUNCTION</scope>
    <scope>ACTIVITY REGULATION</scope>
    <scope>SUBUNIT</scope>
    <scope>MUTAGENESIS OF HIS-24; 102-ASN--THR-107; THR-107; GLN-129 AND 371-ARG--HIS-376</scope>
    <source>
        <strain>DGCC8004</strain>
    </source>
</reference>
<evidence type="ECO:0000250" key="1">
    <source>
        <dbReference type="UniProtKB" id="Q53W17"/>
    </source>
</evidence>
<evidence type="ECO:0000269" key="2">
    <source>
    </source>
</evidence>
<evidence type="ECO:0000269" key="3">
    <source>
    </source>
</evidence>
<evidence type="ECO:0000269" key="4">
    <source>
    </source>
</evidence>
<evidence type="ECO:0000303" key="5">
    <source>
    </source>
</evidence>
<evidence type="ECO:0000303" key="6">
    <source>
    </source>
</evidence>
<evidence type="ECO:0000305" key="7"/>
<name>CSM6A_STRTR</name>
<comment type="function">
    <text evidence="2">CRISPR (clustered regularly interspaced short palindromic repeat) is an adaptive immune system that provides protection against mobile genetic elements (viruses, transposable elements and conjugative plasmids). CRISPR clusters contain spacers, sequences complementary to antecedent mobile elements, and target invading nucleic acids. CRISPR clusters are transcribed and processed into CRISPR RNA (crRNA). The type III-A Csm complex binds crRNA and acts as a crRNA-guided RNase, DNase and cyclic oligoadenylate synthase; binding of target RNA cognate to the crRNA is required for all activities. In a heterologous host this Csm effector complex restricts ssRNA phage MS2, suggesting it may target RNA viruses in vivo. This protein is not part of the Csm complex.</text>
</comment>
<comment type="function">
    <text evidence="3">Csm functions as a non-specific ssDNase. Base-pairing between crRNA and target RNA to form a ternary Csm complex activates a ssDNase activity; target RNA cleavage suppresses the ssDNase, a temporal control that prevents uncontrolled DNA degradation. Viral RNA transcripts probably tether the Csm complex to the viral genome, recruiting Cas10 ssDNA activity which is able to degrade DNA in the transcription bubble, spatially controlling the DNase activity.</text>
</comment>
<comment type="function">
    <text evidence="4">A single-strand-specific endoribonuclease (ssRNase) that is approximately 1000-fold stimulated by cyclic oligoadenylate (cOA); although several species of cOA are synthesized by this organism only cyclic hexaadenylate (cA6) stimulates the ssRNase activity. Cleaves preferentially within GA or AA dinucleotides, although the presence of cA6 broadens the preference. Linear oligoadenylates do not activate the RNase.</text>
</comment>
<comment type="activity regulation">
    <text evidence="4">Non-specific ssRNase activity is allosterically activated about 1000-fold by cyclic hexaadenylate (cA6), a second messenger produced by Cas10 of the ternary Csm effector complex in the presence of a cognate target RNA. ssRNase activity is inhibited by physiological concentrations of ATP (1 mM), activity is restored by cOA.</text>
</comment>
<comment type="subunit">
    <text evidence="1 4">Homodimer (PubMed:28663439). The composite ssRNase active site is formed at the dimer interface (By similarity).</text>
</comment>
<comment type="domain">
    <text evidence="1">The N-terminal CRISPR-associated Rossman fold (CARF) probably binds the cA6 effector. ssRNase activity resides in the C-terminal HEPN domain.</text>
</comment>
<comment type="miscellaneous">
    <text evidence="2">Encoded in a type III-A CRISPR locus.</text>
</comment>
<comment type="similarity">
    <text evidence="7">Belongs to the CRISPR-associated Csm6 family.</text>
</comment>